<sequence>MNSLVATPPVPPHFYETSCRSASYSMSSTNASVNRKRKAEDDCLPSDDTRMSASPSGSPALHPRPLAPRHLKRSRPNVSGRPLSLPRLMETLDTDALRSVLRSLCDRHPEIASEVMHTAPRPSVSAALEVLNNYQSTLQSSFPLGGNPSSDYAYNRVRQHLTNLLEALNDFTPHFLPPNESQPSTSLNYLDGATDIIHRLPRWTTPQHNLEKYAAYEEMSKAWCLVIREAAKRGGGIQLQYGGWDQKLAKHNETAGGKLQDAVNELNQSLGWIGGNVGNPSYPGGSNSQGDMSIRQQLMSGTYGAGLPLKVGPW</sequence>
<dbReference type="EMBL" id="DS989822">
    <property type="protein sequence ID" value="EFQ98736.1"/>
    <property type="molecule type" value="Genomic_DNA"/>
</dbReference>
<dbReference type="RefSeq" id="XP_003177688.1">
    <property type="nucleotide sequence ID" value="XM_003177640.1"/>
</dbReference>
<dbReference type="SMR" id="E5R332"/>
<dbReference type="FunCoup" id="E5R332">
    <property type="interactions" value="11"/>
</dbReference>
<dbReference type="STRING" id="535722.E5R332"/>
<dbReference type="GeneID" id="10033023"/>
<dbReference type="VEuPathDB" id="FungiDB:MGYG_01754"/>
<dbReference type="eggNOG" id="ENOG502RNK4">
    <property type="taxonomic scope" value="Eukaryota"/>
</dbReference>
<dbReference type="HOGENOM" id="CLU_033658_0_0_1"/>
<dbReference type="InParanoid" id="E5R332"/>
<dbReference type="OMA" id="DYTPHFL"/>
<dbReference type="OrthoDB" id="10061064at2759"/>
<dbReference type="Proteomes" id="UP000002669">
    <property type="component" value="Unassembled WGS sequence"/>
</dbReference>
<dbReference type="GO" id="GO:0005737">
    <property type="term" value="C:cytoplasm"/>
    <property type="evidence" value="ECO:0007669"/>
    <property type="project" value="UniProtKB-SubCell"/>
</dbReference>
<dbReference type="GO" id="GO:0031965">
    <property type="term" value="C:nuclear membrane"/>
    <property type="evidence" value="ECO:0007669"/>
    <property type="project" value="TreeGrafter"/>
</dbReference>
<dbReference type="GO" id="GO:0070628">
    <property type="term" value="F:proteasome binding"/>
    <property type="evidence" value="ECO:0007669"/>
    <property type="project" value="TreeGrafter"/>
</dbReference>
<dbReference type="GO" id="GO:0071630">
    <property type="term" value="P:nuclear protein quality control by the ubiquitin-proteasome system"/>
    <property type="evidence" value="ECO:0007669"/>
    <property type="project" value="InterPro"/>
</dbReference>
<dbReference type="GO" id="GO:0031144">
    <property type="term" value="P:proteasome localization"/>
    <property type="evidence" value="ECO:0007669"/>
    <property type="project" value="InterPro"/>
</dbReference>
<dbReference type="GO" id="GO:0015031">
    <property type="term" value="P:protein transport"/>
    <property type="evidence" value="ECO:0007669"/>
    <property type="project" value="UniProtKB-KW"/>
</dbReference>
<dbReference type="FunFam" id="1.20.58.1590:FF:000001">
    <property type="entry name" value="Tethering factor for nuclear proteasome STS1"/>
    <property type="match status" value="1"/>
</dbReference>
<dbReference type="Gene3D" id="1.20.58.1590">
    <property type="entry name" value="Tethering factor for nuclear proteasome Cut8/Sts1"/>
    <property type="match status" value="1"/>
</dbReference>
<dbReference type="InterPro" id="IPR013868">
    <property type="entry name" value="Cut8/Sts1_fam"/>
</dbReference>
<dbReference type="InterPro" id="IPR038422">
    <property type="entry name" value="Cut8/Sts1_sf"/>
</dbReference>
<dbReference type="PANTHER" id="PTHR28032">
    <property type="entry name" value="FI02826P"/>
    <property type="match status" value="1"/>
</dbReference>
<dbReference type="PANTHER" id="PTHR28032:SF1">
    <property type="entry name" value="FI02826P"/>
    <property type="match status" value="1"/>
</dbReference>
<dbReference type="Pfam" id="PF08559">
    <property type="entry name" value="Cut8"/>
    <property type="match status" value="1"/>
</dbReference>
<accession>E5R332</accession>
<organism>
    <name type="scientific">Arthroderma gypseum (strain ATCC MYA-4604 / CBS 118893)</name>
    <name type="common">Microsporum gypseum</name>
    <dbReference type="NCBI Taxonomy" id="535722"/>
    <lineage>
        <taxon>Eukaryota</taxon>
        <taxon>Fungi</taxon>
        <taxon>Dikarya</taxon>
        <taxon>Ascomycota</taxon>
        <taxon>Pezizomycotina</taxon>
        <taxon>Eurotiomycetes</taxon>
        <taxon>Eurotiomycetidae</taxon>
        <taxon>Onygenales</taxon>
        <taxon>Arthrodermataceae</taxon>
        <taxon>Nannizzia</taxon>
    </lineage>
</organism>
<name>STS1_ARTGP</name>
<comment type="function">
    <text evidence="1">Involved in ubiquitin-mediated protein degradation. Regulatory factor in the ubiquitin/proteasome pathway that controls the turnover of proteasome substrates. Targets proteasomes to the nucleus and facilitates the degradation of nuclear proteins (By similarity).</text>
</comment>
<comment type="subunit">
    <text evidence="1">Binds the proteasome.</text>
</comment>
<comment type="subcellular location">
    <subcellularLocation>
        <location evidence="1">Cytoplasm</location>
    </subcellularLocation>
    <subcellularLocation>
        <location evidence="1">Nucleus</location>
    </subcellularLocation>
</comment>
<comment type="similarity">
    <text evidence="3">Belongs to the cut8/STS1 family.</text>
</comment>
<feature type="chain" id="PRO_0000409392" description="Tethering factor for nuclear proteasome STS1">
    <location>
        <begin position="1"/>
        <end position="314"/>
    </location>
</feature>
<feature type="region of interest" description="Disordered" evidence="2">
    <location>
        <begin position="25"/>
        <end position="85"/>
    </location>
</feature>
<proteinExistence type="inferred from homology"/>
<protein>
    <recommendedName>
        <fullName>Tethering factor for nuclear proteasome STS1</fullName>
    </recommendedName>
</protein>
<gene>
    <name type="primary">STS1</name>
    <name type="ORF">MGYG_01754</name>
</gene>
<keyword id="KW-0963">Cytoplasm</keyword>
<keyword id="KW-0539">Nucleus</keyword>
<keyword id="KW-0653">Protein transport</keyword>
<keyword id="KW-1185">Reference proteome</keyword>
<keyword id="KW-0813">Transport</keyword>
<reference key="1">
    <citation type="journal article" date="2012" name="MBio">
        <title>Comparative genome analysis of Trichophyton rubrum and related dermatophytes reveals candidate genes involved in infection.</title>
        <authorList>
            <person name="Martinez D.A."/>
            <person name="Oliver B.G."/>
            <person name="Graeser Y."/>
            <person name="Goldberg J.M."/>
            <person name="Li W."/>
            <person name="Martinez-Rossi N.M."/>
            <person name="Monod M."/>
            <person name="Shelest E."/>
            <person name="Barton R.C."/>
            <person name="Birch E."/>
            <person name="Brakhage A.A."/>
            <person name="Chen Z."/>
            <person name="Gurr S.J."/>
            <person name="Heiman D."/>
            <person name="Heitman J."/>
            <person name="Kosti I."/>
            <person name="Rossi A."/>
            <person name="Saif S."/>
            <person name="Samalova M."/>
            <person name="Saunders C.W."/>
            <person name="Shea T."/>
            <person name="Summerbell R.C."/>
            <person name="Xu J."/>
            <person name="Young S."/>
            <person name="Zeng Q."/>
            <person name="Birren B.W."/>
            <person name="Cuomo C.A."/>
            <person name="White T.C."/>
        </authorList>
    </citation>
    <scope>NUCLEOTIDE SEQUENCE [LARGE SCALE GENOMIC DNA]</scope>
    <source>
        <strain>ATCC MYA-4604 / CBS 118893</strain>
    </source>
</reference>
<evidence type="ECO:0000250" key="1"/>
<evidence type="ECO:0000256" key="2">
    <source>
        <dbReference type="SAM" id="MobiDB-lite"/>
    </source>
</evidence>
<evidence type="ECO:0000305" key="3"/>